<gene>
    <name evidence="6" type="primary">Cdc20b</name>
</gene>
<protein>
    <recommendedName>
        <fullName>Cell division cycle protein 20 homolog B</fullName>
    </recommendedName>
</protein>
<evidence type="ECO:0000250" key="1">
    <source>
        <dbReference type="UniProtKB" id="A0A1L8I2C5"/>
    </source>
</evidence>
<evidence type="ECO:0000255" key="2"/>
<evidence type="ECO:0000256" key="3">
    <source>
        <dbReference type="SAM" id="MobiDB-lite"/>
    </source>
</evidence>
<evidence type="ECO:0000269" key="4">
    <source>
    </source>
</evidence>
<evidence type="ECO:0000305" key="5"/>
<evidence type="ECO:0000312" key="6">
    <source>
        <dbReference type="MGI" id="MGI:3644472"/>
    </source>
</evidence>
<proteinExistence type="evidence at transcript level"/>
<reference key="1">
    <citation type="journal article" date="2009" name="PLoS Biol.">
        <title>Lineage-specific biology revealed by a finished genome assembly of the mouse.</title>
        <authorList>
            <person name="Church D.M."/>
            <person name="Goodstadt L."/>
            <person name="Hillier L.W."/>
            <person name="Zody M.C."/>
            <person name="Goldstein S."/>
            <person name="She X."/>
            <person name="Bult C.J."/>
            <person name="Agarwala R."/>
            <person name="Cherry J.L."/>
            <person name="DiCuccio M."/>
            <person name="Hlavina W."/>
            <person name="Kapustin Y."/>
            <person name="Meric P."/>
            <person name="Maglott D."/>
            <person name="Birtle Z."/>
            <person name="Marques A.C."/>
            <person name="Graves T."/>
            <person name="Zhou S."/>
            <person name="Teague B."/>
            <person name="Potamousis K."/>
            <person name="Churas C."/>
            <person name="Place M."/>
            <person name="Herschleb J."/>
            <person name="Runnheim R."/>
            <person name="Forrest D."/>
            <person name="Amos-Landgraf J."/>
            <person name="Schwartz D.C."/>
            <person name="Cheng Z."/>
            <person name="Lindblad-Toh K."/>
            <person name="Eichler E.E."/>
            <person name="Ponting C.P."/>
        </authorList>
    </citation>
    <scope>NUCLEOTIDE SEQUENCE [LARGE SCALE GENOMIC DNA]</scope>
    <source>
        <strain>C57BL/6J</strain>
    </source>
</reference>
<reference key="2">
    <citation type="journal article" date="2018" name="Nat. Commun.">
        <title>CDC20B is required for deuterosome-mediated centriole production in multiciliated cells.</title>
        <authorList>
            <person name="Revinski D.R."/>
            <person name="Zaragosi L.E."/>
            <person name="Boutin C."/>
            <person name="Ruiz-Garcia S."/>
            <person name="Deprez M."/>
            <person name="Thome V."/>
            <person name="Rosnet O."/>
            <person name="Gay A.S."/>
            <person name="Mercey O."/>
            <person name="Paquet A."/>
            <person name="Pons N."/>
            <person name="Ponzio G."/>
            <person name="Marcet B."/>
            <person name="Kodjabachian L."/>
            <person name="Barbry P."/>
        </authorList>
    </citation>
    <scope>FUNCTION</scope>
    <scope>SUBCELLULAR LOCATION</scope>
    <scope>TISSUE SPECIFICITY</scope>
</reference>
<comment type="function">
    <text evidence="1">Protein regulator of centriole-deuterosome disengagement and subsequently participates in the ciliogenesis in multiciliated cells (MCCs).</text>
</comment>
<comment type="subcellular location">
    <subcellularLocation>
        <location evidence="1">Cytoplasm</location>
    </subcellularLocation>
    <text evidence="1">Tightly associated to mature deuterosomes.</text>
</comment>
<comment type="tissue specificity">
    <text evidence="4">Expressed in multiciliated cells (MCCs).</text>
</comment>
<comment type="similarity">
    <text evidence="5">Belongs to the WD repeat CDC20/Fizzy family.</text>
</comment>
<dbReference type="EMBL" id="AC165265">
    <property type="status" value="NOT_ANNOTATED_CDS"/>
    <property type="molecule type" value="Genomic_DNA"/>
</dbReference>
<dbReference type="EMBL" id="AC159207">
    <property type="status" value="NOT_ANNOTATED_CDS"/>
    <property type="molecule type" value="Genomic_DNA"/>
</dbReference>
<dbReference type="CCDS" id="CCDS59591.1"/>
<dbReference type="RefSeq" id="NP_001268416.1">
    <property type="nucleotide sequence ID" value="NM_001281487.1"/>
</dbReference>
<dbReference type="SMR" id="D3Z3I0"/>
<dbReference type="FunCoup" id="D3Z3I0">
    <property type="interactions" value="9"/>
</dbReference>
<dbReference type="STRING" id="10090.ENSMUSP00000104867"/>
<dbReference type="PhosphoSitePlus" id="D3Z3I0"/>
<dbReference type="PaxDb" id="10090-ENSMUSP00000104867"/>
<dbReference type="Antibodypedia" id="23375">
    <property type="antibodies" value="138 antibodies from 19 providers"/>
</dbReference>
<dbReference type="DNASU" id="238896"/>
<dbReference type="Ensembl" id="ENSMUST00000109244.9">
    <property type="protein sequence ID" value="ENSMUSP00000104867.2"/>
    <property type="gene ID" value="ENSMUSG00000078926.9"/>
</dbReference>
<dbReference type="GeneID" id="238896"/>
<dbReference type="KEGG" id="mmu:238896"/>
<dbReference type="UCSC" id="uc033gng.1">
    <property type="organism name" value="mouse"/>
</dbReference>
<dbReference type="AGR" id="MGI:3644472"/>
<dbReference type="CTD" id="166979"/>
<dbReference type="MGI" id="MGI:3644472">
    <property type="gene designation" value="Cdc20b"/>
</dbReference>
<dbReference type="VEuPathDB" id="HostDB:ENSMUSG00000078926"/>
<dbReference type="eggNOG" id="KOG0305">
    <property type="taxonomic scope" value="Eukaryota"/>
</dbReference>
<dbReference type="GeneTree" id="ENSGT00950000183104"/>
<dbReference type="HOGENOM" id="CLU_014831_6_2_1"/>
<dbReference type="InParanoid" id="D3Z3I0"/>
<dbReference type="OMA" id="GTASVWK"/>
<dbReference type="OrthoDB" id="10263272at2759"/>
<dbReference type="PhylomeDB" id="D3Z3I0"/>
<dbReference type="TreeFam" id="TF337979"/>
<dbReference type="BioGRID-ORCS" id="238896">
    <property type="hits" value="3 hits in 75 CRISPR screens"/>
</dbReference>
<dbReference type="ChiTaRS" id="Cdc20b">
    <property type="organism name" value="mouse"/>
</dbReference>
<dbReference type="PRO" id="PR:D3Z3I0"/>
<dbReference type="Proteomes" id="UP000000589">
    <property type="component" value="Chromosome 13"/>
</dbReference>
<dbReference type="RNAct" id="D3Z3I0">
    <property type="molecule type" value="protein"/>
</dbReference>
<dbReference type="Bgee" id="ENSMUSG00000078926">
    <property type="expression patterns" value="Expressed in spermatocyte and 23 other cell types or tissues"/>
</dbReference>
<dbReference type="ExpressionAtlas" id="D3Z3I0">
    <property type="expression patterns" value="baseline and differential"/>
</dbReference>
<dbReference type="GO" id="GO:0005737">
    <property type="term" value="C:cytoplasm"/>
    <property type="evidence" value="ECO:0007669"/>
    <property type="project" value="UniProtKB-SubCell"/>
</dbReference>
<dbReference type="GO" id="GO:0098536">
    <property type="term" value="C:deuterosome"/>
    <property type="evidence" value="ECO:0000314"/>
    <property type="project" value="UniProtKB"/>
</dbReference>
<dbReference type="GO" id="GO:0010997">
    <property type="term" value="F:anaphase-promoting complex binding"/>
    <property type="evidence" value="ECO:0007669"/>
    <property type="project" value="InterPro"/>
</dbReference>
<dbReference type="GO" id="GO:0097027">
    <property type="term" value="F:ubiquitin-protein transferase activator activity"/>
    <property type="evidence" value="ECO:0007669"/>
    <property type="project" value="InterPro"/>
</dbReference>
<dbReference type="GO" id="GO:0097742">
    <property type="term" value="P:de novo centriole assembly"/>
    <property type="evidence" value="ECO:0000314"/>
    <property type="project" value="UniProtKB"/>
</dbReference>
<dbReference type="Gene3D" id="2.130.10.10">
    <property type="entry name" value="YVTN repeat-like/Quinoprotein amine dehydrogenase"/>
    <property type="match status" value="1"/>
</dbReference>
<dbReference type="InterPro" id="IPR033010">
    <property type="entry name" value="Cdc20/Fizzy"/>
</dbReference>
<dbReference type="InterPro" id="IPR015943">
    <property type="entry name" value="WD40/YVTN_repeat-like_dom_sf"/>
</dbReference>
<dbReference type="InterPro" id="IPR056150">
    <property type="entry name" value="WD40_CDC20-Fz"/>
</dbReference>
<dbReference type="InterPro" id="IPR036322">
    <property type="entry name" value="WD40_repeat_dom_sf"/>
</dbReference>
<dbReference type="InterPro" id="IPR001680">
    <property type="entry name" value="WD40_rpt"/>
</dbReference>
<dbReference type="PANTHER" id="PTHR19918">
    <property type="entry name" value="CELL DIVISION CYCLE 20 CDC20 FIZZY -RELATED"/>
    <property type="match status" value="1"/>
</dbReference>
<dbReference type="PANTHER" id="PTHR19918:SF4">
    <property type="entry name" value="CELL DIVISION CYCLE PROTEIN 20 HOMOLOG B"/>
    <property type="match status" value="1"/>
</dbReference>
<dbReference type="Pfam" id="PF24807">
    <property type="entry name" value="WD40_CDC20-Fz"/>
    <property type="match status" value="1"/>
</dbReference>
<dbReference type="SMART" id="SM00320">
    <property type="entry name" value="WD40"/>
    <property type="match status" value="6"/>
</dbReference>
<dbReference type="SUPFAM" id="SSF50978">
    <property type="entry name" value="WD40 repeat-like"/>
    <property type="match status" value="1"/>
</dbReference>
<dbReference type="PROSITE" id="PS50082">
    <property type="entry name" value="WD_REPEATS_2"/>
    <property type="match status" value="3"/>
</dbReference>
<dbReference type="PROSITE" id="PS50294">
    <property type="entry name" value="WD_REPEATS_REGION"/>
    <property type="match status" value="2"/>
</dbReference>
<accession>D3Z3I0</accession>
<keyword id="KW-0963">Cytoplasm</keyword>
<keyword id="KW-1185">Reference proteome</keyword>
<keyword id="KW-0677">Repeat</keyword>
<keyword id="KW-0853">WD repeat</keyword>
<name>CD20B_MOUSE</name>
<sequence>MEWKLQRTARRKIRTEEEMLWENIMRVLANGMKQQRNQGSPKELDSVAVTYSSFKSNFVKRLSAEIPVASSPITTRWQLSPARDPESSSSVEEGPPSHTPESLASGLKITPAADTLTLRSHNKNSPKTLSKGSSEVNNSTLRFCKTPLAGDRGWKENLATKGQRCLNQPFSTQKGAQQIDGKMHLCEESRCVRTGCRFGARDEFYLRRFSGVYHSTCQPEVKIHLTGLRNDYYLNTLDWSSQNLVAVALGTSVYIWNGQNHSWIENIDLSVCCHYVSSVTWMREGSCLAVGTSEGEVQLWDAITKKQLRNLHGHLSVVGALSWNHCTLSSGSRLGRVHHHDVRVAQHRVGTLYHKEAVCSLKWSPDGRLLSSGCNDGLLTIWPHDPGAGVQGLPLKVIPQSTAVKAMEWCPWQSEVLAVGGGVKDGCLHVLDINTGKNIQTPSTQSQICSLIWLPKTKEIATGQGAPKNDVALWTCPTLFRSGGFFGHRDRVLHLSLSPDQTRLFSAAADGTACVWKCC</sequence>
<feature type="chain" id="PRO_0000458670" description="Cell division cycle protein 20 homolog B">
    <location>
        <begin position="1"/>
        <end position="519"/>
    </location>
</feature>
<feature type="repeat" description="WD 1" evidence="2">
    <location>
        <begin position="229"/>
        <end position="266"/>
    </location>
</feature>
<feature type="repeat" description="WD 2" evidence="2">
    <location>
        <begin position="271"/>
        <end position="310"/>
    </location>
</feature>
<feature type="repeat" description="WD 3" evidence="2">
    <location>
        <begin position="353"/>
        <end position="392"/>
    </location>
</feature>
<feature type="repeat" description="WD 4" evidence="2">
    <location>
        <begin position="399"/>
        <end position="441"/>
    </location>
</feature>
<feature type="repeat" description="WD 5" evidence="2">
    <location>
        <begin position="443"/>
        <end position="484"/>
    </location>
</feature>
<feature type="repeat" description="WD 6" evidence="2">
    <location>
        <begin position="487"/>
        <end position="519"/>
    </location>
</feature>
<feature type="region of interest" description="Disordered" evidence="3">
    <location>
        <begin position="77"/>
        <end position="106"/>
    </location>
</feature>
<feature type="compositionally biased region" description="Low complexity" evidence="3">
    <location>
        <begin position="87"/>
        <end position="96"/>
    </location>
</feature>
<organism>
    <name type="scientific">Mus musculus</name>
    <name type="common">Mouse</name>
    <dbReference type="NCBI Taxonomy" id="10090"/>
    <lineage>
        <taxon>Eukaryota</taxon>
        <taxon>Metazoa</taxon>
        <taxon>Chordata</taxon>
        <taxon>Craniata</taxon>
        <taxon>Vertebrata</taxon>
        <taxon>Euteleostomi</taxon>
        <taxon>Mammalia</taxon>
        <taxon>Eutheria</taxon>
        <taxon>Euarchontoglires</taxon>
        <taxon>Glires</taxon>
        <taxon>Rodentia</taxon>
        <taxon>Myomorpha</taxon>
        <taxon>Muroidea</taxon>
        <taxon>Muridae</taxon>
        <taxon>Murinae</taxon>
        <taxon>Mus</taxon>
        <taxon>Mus</taxon>
    </lineage>
</organism>